<comment type="catalytic activity">
    <reaction evidence="1">
        <text>Hydrolysis of terminal, non-reducing beta-D-glucosyl residues with release of beta-D-glucose.</text>
        <dbReference type="EC" id="3.2.1.21"/>
    </reaction>
</comment>
<comment type="tissue specificity">
    <text>Leaves.</text>
</comment>
<comment type="similarity">
    <text evidence="8">Belongs to the glycosyl hydrolase 1 family.</text>
</comment>
<evidence type="ECO:0000250" key="1">
    <source>
        <dbReference type="UniProtKB" id="O64879"/>
    </source>
</evidence>
<evidence type="ECO:0000250" key="2">
    <source>
        <dbReference type="UniProtKB" id="Q1XH05"/>
    </source>
</evidence>
<evidence type="ECO:0000250" key="3">
    <source>
        <dbReference type="UniProtKB" id="Q7XSK0"/>
    </source>
</evidence>
<evidence type="ECO:0000250" key="4">
    <source>
        <dbReference type="UniProtKB" id="Q9SPP9"/>
    </source>
</evidence>
<evidence type="ECO:0000255" key="5"/>
<evidence type="ECO:0000255" key="6">
    <source>
        <dbReference type="PROSITE-ProRule" id="PRU00498"/>
    </source>
</evidence>
<evidence type="ECO:0000255" key="7">
    <source>
        <dbReference type="PROSITE-ProRule" id="PRU10055"/>
    </source>
</evidence>
<evidence type="ECO:0000305" key="8"/>
<dbReference type="EC" id="3.2.1.21" evidence="1"/>
<dbReference type="EMBL" id="X56734">
    <property type="protein sequence ID" value="CAA40058.1"/>
    <property type="molecule type" value="mRNA"/>
</dbReference>
<dbReference type="PIR" id="S16581">
    <property type="entry name" value="GLJY31"/>
</dbReference>
<dbReference type="SMR" id="P26204"/>
<dbReference type="CAZy" id="GH1">
    <property type="family name" value="Glycoside Hydrolase Family 1"/>
</dbReference>
<dbReference type="GO" id="GO:0008422">
    <property type="term" value="F:beta-glucosidase activity"/>
    <property type="evidence" value="ECO:0007669"/>
    <property type="project" value="UniProtKB-EC"/>
</dbReference>
<dbReference type="GO" id="GO:0005975">
    <property type="term" value="P:carbohydrate metabolic process"/>
    <property type="evidence" value="ECO:0007669"/>
    <property type="project" value="InterPro"/>
</dbReference>
<dbReference type="FunFam" id="3.20.20.80:FF:000020">
    <property type="entry name" value="Beta-glucosidase 12"/>
    <property type="match status" value="1"/>
</dbReference>
<dbReference type="Gene3D" id="3.20.20.80">
    <property type="entry name" value="Glycosidases"/>
    <property type="match status" value="1"/>
</dbReference>
<dbReference type="InterPro" id="IPR001360">
    <property type="entry name" value="Glyco_hydro_1"/>
</dbReference>
<dbReference type="InterPro" id="IPR033132">
    <property type="entry name" value="Glyco_hydro_1_N_CS"/>
</dbReference>
<dbReference type="InterPro" id="IPR017853">
    <property type="entry name" value="Glycoside_hydrolase_SF"/>
</dbReference>
<dbReference type="PANTHER" id="PTHR10353">
    <property type="entry name" value="GLYCOSYL HYDROLASE"/>
    <property type="match status" value="1"/>
</dbReference>
<dbReference type="PANTHER" id="PTHR10353:SF137">
    <property type="entry name" value="MYROSINASE 3-RELATED"/>
    <property type="match status" value="1"/>
</dbReference>
<dbReference type="Pfam" id="PF00232">
    <property type="entry name" value="Glyco_hydro_1"/>
    <property type="match status" value="1"/>
</dbReference>
<dbReference type="PRINTS" id="PR00131">
    <property type="entry name" value="GLHYDRLASE1"/>
</dbReference>
<dbReference type="SUPFAM" id="SSF51445">
    <property type="entry name" value="(Trans)glycosidases"/>
    <property type="match status" value="1"/>
</dbReference>
<dbReference type="PROSITE" id="PS00572">
    <property type="entry name" value="GLYCOSYL_HYDROL_F1_1"/>
    <property type="match status" value="1"/>
</dbReference>
<dbReference type="PROSITE" id="PS00653">
    <property type="entry name" value="GLYCOSYL_HYDROL_F1_2"/>
    <property type="match status" value="1"/>
</dbReference>
<feature type="signal peptide" evidence="5">
    <location>
        <begin position="1"/>
        <end position="18"/>
    </location>
</feature>
<feature type="chain" id="PRO_0000011764" description="Non-cyanogenic beta-glucosidase">
    <location>
        <begin position="19"/>
        <end position="493"/>
    </location>
</feature>
<feature type="active site" description="Proton donor" evidence="3">
    <location>
        <position position="204"/>
    </location>
</feature>
<feature type="active site" description="Nucleophile" evidence="7">
    <location>
        <position position="422"/>
    </location>
</feature>
<feature type="binding site" evidence="3">
    <location>
        <position position="54"/>
    </location>
    <ligand>
        <name>a beta-D-glucoside</name>
        <dbReference type="ChEBI" id="CHEBI:22798"/>
    </ligand>
</feature>
<feature type="binding site" evidence="3">
    <location>
        <position position="158"/>
    </location>
    <ligand>
        <name>a beta-D-glucoside</name>
        <dbReference type="ChEBI" id="CHEBI:22798"/>
    </ligand>
</feature>
<feature type="binding site" evidence="3">
    <location>
        <begin position="203"/>
        <end position="204"/>
    </location>
    <ligand>
        <name>a beta-D-glucoside</name>
        <dbReference type="ChEBI" id="CHEBI:22798"/>
    </ligand>
</feature>
<feature type="binding site" evidence="3">
    <location>
        <position position="346"/>
    </location>
    <ligand>
        <name>a beta-D-glucoside</name>
        <dbReference type="ChEBI" id="CHEBI:22798"/>
    </ligand>
</feature>
<feature type="binding site" evidence="4">
    <location>
        <position position="422"/>
    </location>
    <ligand>
        <name>a beta-D-glucoside</name>
        <dbReference type="ChEBI" id="CHEBI:22798"/>
    </ligand>
</feature>
<feature type="binding site" evidence="3">
    <location>
        <position position="471"/>
    </location>
    <ligand>
        <name>a beta-D-glucoside</name>
        <dbReference type="ChEBI" id="CHEBI:22798"/>
    </ligand>
</feature>
<feature type="binding site" evidence="3">
    <location>
        <begin position="478"/>
        <end position="479"/>
    </location>
    <ligand>
        <name>a beta-D-glucoside</name>
        <dbReference type="ChEBI" id="CHEBI:22798"/>
    </ligand>
</feature>
<feature type="binding site" evidence="2">
    <location>
        <position position="487"/>
    </location>
    <ligand>
        <name>a beta-D-glucoside</name>
        <dbReference type="ChEBI" id="CHEBI:22798"/>
    </ligand>
</feature>
<feature type="glycosylation site" description="N-linked (GlcNAc...) asparagine" evidence="6">
    <location>
        <position position="34"/>
    </location>
</feature>
<feature type="glycosylation site" description="N-linked (GlcNAc...) asparagine" evidence="6">
    <location>
        <position position="335"/>
    </location>
</feature>
<feature type="glycosylation site" description="N-linked (GlcNAc...) asparagine" evidence="6">
    <location>
        <position position="371"/>
    </location>
</feature>
<feature type="glycosylation site" description="N-linked (GlcNAc...) asparagine" evidence="6">
    <location>
        <position position="412"/>
    </location>
</feature>
<keyword id="KW-0903">Direct protein sequencing</keyword>
<keyword id="KW-0325">Glycoprotein</keyword>
<keyword id="KW-0326">Glycosidase</keyword>
<keyword id="KW-0378">Hydrolase</keyword>
<keyword id="KW-0732">Signal</keyword>
<accession>P26204</accession>
<organism>
    <name type="scientific">Trifolium repens</name>
    <name type="common">Creeping white clover</name>
    <dbReference type="NCBI Taxonomy" id="3899"/>
    <lineage>
        <taxon>Eukaryota</taxon>
        <taxon>Viridiplantae</taxon>
        <taxon>Streptophyta</taxon>
        <taxon>Embryophyta</taxon>
        <taxon>Tracheophyta</taxon>
        <taxon>Spermatophyta</taxon>
        <taxon>Magnoliopsida</taxon>
        <taxon>eudicotyledons</taxon>
        <taxon>Gunneridae</taxon>
        <taxon>Pentapetalae</taxon>
        <taxon>rosids</taxon>
        <taxon>fabids</taxon>
        <taxon>Fabales</taxon>
        <taxon>Fabaceae</taxon>
        <taxon>Papilionoideae</taxon>
        <taxon>50 kb inversion clade</taxon>
        <taxon>NPAAA clade</taxon>
        <taxon>Hologalegina</taxon>
        <taxon>IRL clade</taxon>
        <taxon>Trifolieae</taxon>
        <taxon>Trifolium</taxon>
    </lineage>
</organism>
<reference key="1">
    <citation type="journal article" date="1991" name="Plant Mol. Biol.">
        <title>Nucleotide and derived amino acid sequence of the cyanogenic beta-glucosidase (linamarase) from white clover (Trifolium repens L.).</title>
        <authorList>
            <person name="Oxtoby E."/>
            <person name="Dunn M.A."/>
            <person name="Pancoro A."/>
            <person name="Hughes M.A."/>
        </authorList>
    </citation>
    <scope>NUCLEOTIDE SEQUENCE [MRNA]</scope>
    <scope>PROTEIN SEQUENCE OF 135-157</scope>
    <source>
        <strain>S100 (EG)</strain>
        <tissue>Leaf</tissue>
    </source>
</reference>
<protein>
    <recommendedName>
        <fullName>Non-cyanogenic beta-glucosidase</fullName>
        <ecNumber evidence="1">3.2.1.21</ecNumber>
    </recommendedName>
</protein>
<name>BGLS_TRIRP</name>
<sequence length="493" mass="55960">MDFIVAIFALFVISSFTITSTNAVEASTLLDIGNLSRSSFPRGFIFGAGSSAYQFEGAVNEGGRGPSIWDTFTHKYPEKIRDGSNADITVDQYHRYKEDVGIMKDQNMDSYRFSISWPRILPKGKLSGGINHEGIKYYNNLINELLANGIQPFVTLFHWDLPQVLEDEYGGFLNSGVINDFRDYTDLCFKEFGDRVRYWSTLNEPWVFSNSGYALGTNAPGRCSASNVAKPGDSGTGPYIVTHNQILAHAEAVHVYKTKYQAYQKGKIGITLVSNWLMPLDDNSIPDIKAAERSLDFQFGLFMEQLTTGDYSKSMRRIVKNRLPKFSKFESSLVNGSFDFIGINYYSSSYISNAPSHGNAKPSYSTNPMTNISFEKHGIPLGPRAASIWIYVYPYMFIQEDFEIFCYILKINITILQFSITENGMNEFNDATLPVEEALLNTYRIDYYYRHLYYIRSAIRAGSNVKGFYAWSFLDCNEWFAGFTVRFGLNFVD</sequence>
<proteinExistence type="evidence at protein level"/>